<name>KHSE_BUCAI</name>
<organism>
    <name type="scientific">Buchnera aphidicola subsp. Acyrthosiphon pisum (strain APS)</name>
    <name type="common">Acyrthosiphon pisum symbiotic bacterium</name>
    <dbReference type="NCBI Taxonomy" id="107806"/>
    <lineage>
        <taxon>Bacteria</taxon>
        <taxon>Pseudomonadati</taxon>
        <taxon>Pseudomonadota</taxon>
        <taxon>Gammaproteobacteria</taxon>
        <taxon>Enterobacterales</taxon>
        <taxon>Erwiniaceae</taxon>
        <taxon>Buchnera</taxon>
    </lineage>
</organism>
<accession>O66132</accession>
<gene>
    <name evidence="1" type="primary">thrB</name>
    <name type="ordered locus">BU193</name>
</gene>
<comment type="function">
    <text evidence="1">Catalyzes the ATP-dependent phosphorylation of L-homoserine to L-homoserine phosphate.</text>
</comment>
<comment type="catalytic activity">
    <reaction evidence="1">
        <text>L-homoserine + ATP = O-phospho-L-homoserine + ADP + H(+)</text>
        <dbReference type="Rhea" id="RHEA:13985"/>
        <dbReference type="ChEBI" id="CHEBI:15378"/>
        <dbReference type="ChEBI" id="CHEBI:30616"/>
        <dbReference type="ChEBI" id="CHEBI:57476"/>
        <dbReference type="ChEBI" id="CHEBI:57590"/>
        <dbReference type="ChEBI" id="CHEBI:456216"/>
        <dbReference type="EC" id="2.7.1.39"/>
    </reaction>
</comment>
<comment type="pathway">
    <text evidence="1">Amino-acid biosynthesis; L-threonine biosynthesis; L-threonine from L-aspartate: step 4/5.</text>
</comment>
<comment type="subcellular location">
    <subcellularLocation>
        <location evidence="1">Cytoplasm</location>
    </subcellularLocation>
</comment>
<comment type="similarity">
    <text evidence="1">Belongs to the GHMP kinase family. Homoserine kinase subfamily.</text>
</comment>
<feature type="chain" id="PRO_0000156555" description="Homoserine kinase">
    <location>
        <begin position="1"/>
        <end position="309"/>
    </location>
</feature>
<feature type="binding site" evidence="1">
    <location>
        <begin position="91"/>
        <end position="101"/>
    </location>
    <ligand>
        <name>ATP</name>
        <dbReference type="ChEBI" id="CHEBI:30616"/>
    </ligand>
</feature>
<keyword id="KW-0028">Amino-acid biosynthesis</keyword>
<keyword id="KW-0067">ATP-binding</keyword>
<keyword id="KW-0963">Cytoplasm</keyword>
<keyword id="KW-0418">Kinase</keyword>
<keyword id="KW-0547">Nucleotide-binding</keyword>
<keyword id="KW-1185">Reference proteome</keyword>
<keyword id="KW-0791">Threonine biosynthesis</keyword>
<keyword id="KW-0808">Transferase</keyword>
<evidence type="ECO:0000255" key="1">
    <source>
        <dbReference type="HAMAP-Rule" id="MF_00384"/>
    </source>
</evidence>
<sequence>MIKIYAPASIGNVGVGFDILGAAIIPVNGSLLGDFVTVKLSNKFNLVNKGIFSNKLPKNTEQNIVWKCWLKFCNTIKRNIPVSIILEKNMPIGSGLGSSACSIVATLVAMNEFCDKPLNSKELLLLMGEVEGEISGSIHYDNVAPCYLGGLQLILEDSKIISQTIPNFKNWFWIVAWPGTKVPTAEARDILPKKYKKETCIKNSRYLAGFIHASYSQQPHLAARLMQDFIAEPYRIKLLPNYLYVKEKIKKIGAISSGISGSGPTIFSISDNINTAQKISAWLTENYLQNTTGFVHICFLDSKGVRKIG</sequence>
<reference key="1">
    <citation type="journal article" date="2000" name="Nature">
        <title>Genome sequence of the endocellular bacterial symbiont of aphids Buchnera sp. APS.</title>
        <authorList>
            <person name="Shigenobu S."/>
            <person name="Watanabe H."/>
            <person name="Hattori M."/>
            <person name="Sakaki Y."/>
            <person name="Ishikawa H."/>
        </authorList>
    </citation>
    <scope>NUCLEOTIDE SEQUENCE [LARGE SCALE GENOMIC DNA]</scope>
    <source>
        <strain>APS</strain>
    </source>
</reference>
<reference key="2">
    <citation type="journal article" date="1997" name="Insect Biochem. Mol. Biol.">
        <title>Differential display of mRNAs related to amino acid metabolism in the endosymbiotic system of aphids.</title>
        <authorList>
            <person name="Nakabachi A."/>
            <person name="Ishikawa H."/>
        </authorList>
    </citation>
    <scope>NUCLEOTIDE SEQUENCE [GENOMIC DNA] OF 147-244</scope>
</reference>
<dbReference type="EC" id="2.7.1.39" evidence="1"/>
<dbReference type="EMBL" id="BA000003">
    <property type="protein sequence ID" value="BAB12910.1"/>
    <property type="molecule type" value="Genomic_DNA"/>
</dbReference>
<dbReference type="EMBL" id="AB004856">
    <property type="protein sequence ID" value="BAA25384.1"/>
    <property type="molecule type" value="mRNA"/>
</dbReference>
<dbReference type="RefSeq" id="NP_240024.1">
    <property type="nucleotide sequence ID" value="NC_002528.1"/>
</dbReference>
<dbReference type="RefSeq" id="WP_010895992.1">
    <property type="nucleotide sequence ID" value="NC_002528.1"/>
</dbReference>
<dbReference type="SMR" id="O66132"/>
<dbReference type="STRING" id="563178.BUAP5A_190"/>
<dbReference type="EnsemblBacteria" id="BAB12910">
    <property type="protein sequence ID" value="BAB12910"/>
    <property type="gene ID" value="BAB12910"/>
</dbReference>
<dbReference type="KEGG" id="buc:BU193"/>
<dbReference type="PATRIC" id="fig|107806.10.peg.204"/>
<dbReference type="eggNOG" id="COG0083">
    <property type="taxonomic scope" value="Bacteria"/>
</dbReference>
<dbReference type="HOGENOM" id="CLU_041243_1_1_6"/>
<dbReference type="UniPathway" id="UPA00050">
    <property type="reaction ID" value="UER00064"/>
</dbReference>
<dbReference type="Proteomes" id="UP000001806">
    <property type="component" value="Chromosome"/>
</dbReference>
<dbReference type="GO" id="GO:0005737">
    <property type="term" value="C:cytoplasm"/>
    <property type="evidence" value="ECO:0007669"/>
    <property type="project" value="UniProtKB-SubCell"/>
</dbReference>
<dbReference type="GO" id="GO:0005524">
    <property type="term" value="F:ATP binding"/>
    <property type="evidence" value="ECO:0007669"/>
    <property type="project" value="UniProtKB-UniRule"/>
</dbReference>
<dbReference type="GO" id="GO:0004413">
    <property type="term" value="F:homoserine kinase activity"/>
    <property type="evidence" value="ECO:0007669"/>
    <property type="project" value="UniProtKB-UniRule"/>
</dbReference>
<dbReference type="GO" id="GO:0009088">
    <property type="term" value="P:threonine biosynthetic process"/>
    <property type="evidence" value="ECO:0007669"/>
    <property type="project" value="UniProtKB-UniRule"/>
</dbReference>
<dbReference type="Gene3D" id="3.30.230.10">
    <property type="match status" value="1"/>
</dbReference>
<dbReference type="Gene3D" id="3.30.70.890">
    <property type="entry name" value="GHMP kinase, C-terminal domain"/>
    <property type="match status" value="1"/>
</dbReference>
<dbReference type="HAMAP" id="MF_00384">
    <property type="entry name" value="Homoser_kinase"/>
    <property type="match status" value="1"/>
</dbReference>
<dbReference type="InterPro" id="IPR013750">
    <property type="entry name" value="GHMP_kinase_C_dom"/>
</dbReference>
<dbReference type="InterPro" id="IPR036554">
    <property type="entry name" value="GHMP_kinase_C_sf"/>
</dbReference>
<dbReference type="InterPro" id="IPR006204">
    <property type="entry name" value="GHMP_kinase_N_dom"/>
</dbReference>
<dbReference type="InterPro" id="IPR006203">
    <property type="entry name" value="GHMP_knse_ATP-bd_CS"/>
</dbReference>
<dbReference type="InterPro" id="IPR000870">
    <property type="entry name" value="Homoserine_kinase"/>
</dbReference>
<dbReference type="InterPro" id="IPR020568">
    <property type="entry name" value="Ribosomal_Su5_D2-typ_SF"/>
</dbReference>
<dbReference type="InterPro" id="IPR014721">
    <property type="entry name" value="Ribsml_uS5_D2-typ_fold_subgr"/>
</dbReference>
<dbReference type="NCBIfam" id="NF002288">
    <property type="entry name" value="PRK01212.1-4"/>
    <property type="match status" value="1"/>
</dbReference>
<dbReference type="NCBIfam" id="TIGR00191">
    <property type="entry name" value="thrB"/>
    <property type="match status" value="1"/>
</dbReference>
<dbReference type="PANTHER" id="PTHR20861:SF1">
    <property type="entry name" value="HOMOSERINE KINASE"/>
    <property type="match status" value="1"/>
</dbReference>
<dbReference type="PANTHER" id="PTHR20861">
    <property type="entry name" value="HOMOSERINE/4-DIPHOSPHOCYTIDYL-2-C-METHYL-D-ERYTHRITOL KINASE"/>
    <property type="match status" value="1"/>
</dbReference>
<dbReference type="Pfam" id="PF08544">
    <property type="entry name" value="GHMP_kinases_C"/>
    <property type="match status" value="1"/>
</dbReference>
<dbReference type="Pfam" id="PF00288">
    <property type="entry name" value="GHMP_kinases_N"/>
    <property type="match status" value="1"/>
</dbReference>
<dbReference type="PIRSF" id="PIRSF000676">
    <property type="entry name" value="Homoser_kin"/>
    <property type="match status" value="1"/>
</dbReference>
<dbReference type="PRINTS" id="PR00958">
    <property type="entry name" value="HOMSERKINASE"/>
</dbReference>
<dbReference type="SUPFAM" id="SSF55060">
    <property type="entry name" value="GHMP Kinase, C-terminal domain"/>
    <property type="match status" value="1"/>
</dbReference>
<dbReference type="SUPFAM" id="SSF54211">
    <property type="entry name" value="Ribosomal protein S5 domain 2-like"/>
    <property type="match status" value="1"/>
</dbReference>
<dbReference type="PROSITE" id="PS00627">
    <property type="entry name" value="GHMP_KINASES_ATP"/>
    <property type="match status" value="1"/>
</dbReference>
<proteinExistence type="evidence at transcript level"/>
<protein>
    <recommendedName>
        <fullName evidence="1">Homoserine kinase</fullName>
        <shortName evidence="1">HK</shortName>
        <shortName evidence="1">HSK</shortName>
        <ecNumber evidence="1">2.7.1.39</ecNumber>
    </recommendedName>
</protein>